<sequence>MNEQELKQMIEGILTEMSGGKTTDTVAAAPTKSVVETVITEGSIPDITEVDIKKQLLVPEPADREGYLKMKQMTPARLGLWRAGPRYKTETILRFRADHAVAQDSVFSYVSEDLVKEMNFIPVNTKCQDKDEYLTRPDLGREFDNEMVEVIRANTTKNAKLQIVVGDGLSSAAIEANIKDILPSIKQGLKMYNLDFDNIIFVKHCRVPSMDQIGEITGADVVCLLVGERPGLVTAESMSAYIAYKPTIGMPEARRTVISNIHSGGTPPVEAGAYIAELIHNMLEKKCSGIDLK</sequence>
<feature type="chain" id="PRO_1000212215" description="Ethanolamine ammonia-lyase small subunit">
    <location>
        <begin position="1"/>
        <end position="293"/>
    </location>
</feature>
<feature type="binding site" evidence="1">
    <location>
        <position position="207"/>
    </location>
    <ligand>
        <name>adenosylcob(III)alamin</name>
        <dbReference type="ChEBI" id="CHEBI:18408"/>
    </ligand>
</feature>
<feature type="binding site" evidence="1">
    <location>
        <position position="228"/>
    </location>
    <ligand>
        <name>adenosylcob(III)alamin</name>
        <dbReference type="ChEBI" id="CHEBI:18408"/>
    </ligand>
</feature>
<accession>C1L282</accession>
<comment type="function">
    <text evidence="1">Catalyzes the deamination of various vicinal amino-alcohols to oxo compounds. Allows this organism to utilize ethanolamine as the sole source of nitrogen and carbon in the presence of external vitamin B12.</text>
</comment>
<comment type="catalytic activity">
    <reaction evidence="1">
        <text>ethanolamine = acetaldehyde + NH4(+)</text>
        <dbReference type="Rhea" id="RHEA:15313"/>
        <dbReference type="ChEBI" id="CHEBI:15343"/>
        <dbReference type="ChEBI" id="CHEBI:28938"/>
        <dbReference type="ChEBI" id="CHEBI:57603"/>
        <dbReference type="EC" id="4.3.1.7"/>
    </reaction>
</comment>
<comment type="cofactor">
    <cofactor evidence="1">
        <name>adenosylcob(III)alamin</name>
        <dbReference type="ChEBI" id="CHEBI:18408"/>
    </cofactor>
    <text evidence="1">Binds between the large and small subunits.</text>
</comment>
<comment type="pathway">
    <text evidence="1">Amine and polyamine degradation; ethanolamine degradation.</text>
</comment>
<comment type="subunit">
    <text evidence="1">The basic unit is a heterodimer which dimerizes to form tetramers. The heterotetramers trimerize; 6 large subunits form a core ring with 6 small subunits projecting outwards.</text>
</comment>
<comment type="subcellular location">
    <subcellularLocation>
        <location evidence="1">Bacterial microcompartment</location>
    </subcellularLocation>
</comment>
<comment type="similarity">
    <text evidence="1">Belongs to the EutC family.</text>
</comment>
<proteinExistence type="inferred from homology"/>
<name>EUTC_LISMC</name>
<keyword id="KW-1283">Bacterial microcompartment</keyword>
<keyword id="KW-0846">Cobalamin</keyword>
<keyword id="KW-0170">Cobalt</keyword>
<keyword id="KW-0456">Lyase</keyword>
<protein>
    <recommendedName>
        <fullName evidence="1">Ethanolamine ammonia-lyase small subunit</fullName>
        <shortName evidence="1">EAL small subunit</shortName>
        <ecNumber evidence="1">4.3.1.7</ecNumber>
    </recommendedName>
</protein>
<reference key="1">
    <citation type="journal article" date="2012" name="BMC Genomics">
        <title>Comparative genomics and transcriptomics of lineages I, II, and III strains of Listeria monocytogenes.</title>
        <authorList>
            <person name="Hain T."/>
            <person name="Ghai R."/>
            <person name="Billion A."/>
            <person name="Kuenne C.T."/>
            <person name="Steinweg C."/>
            <person name="Izar B."/>
            <person name="Mohamed W."/>
            <person name="Mraheil M."/>
            <person name="Domann E."/>
            <person name="Schaffrath S."/>
            <person name="Karst U."/>
            <person name="Goesmann A."/>
            <person name="Oehm S."/>
            <person name="Puhler A."/>
            <person name="Merkl R."/>
            <person name="Vorwerk S."/>
            <person name="Glaser P."/>
            <person name="Garrido P."/>
            <person name="Rusniok C."/>
            <person name="Buchrieser C."/>
            <person name="Goebel W."/>
            <person name="Chakraborty T."/>
        </authorList>
    </citation>
    <scope>NUCLEOTIDE SEQUENCE [LARGE SCALE GENOMIC DNA]</scope>
    <source>
        <strain>CLIP80459</strain>
    </source>
</reference>
<evidence type="ECO:0000255" key="1">
    <source>
        <dbReference type="HAMAP-Rule" id="MF_00601"/>
    </source>
</evidence>
<organism>
    <name type="scientific">Listeria monocytogenes serotype 4b (strain CLIP80459)</name>
    <dbReference type="NCBI Taxonomy" id="568819"/>
    <lineage>
        <taxon>Bacteria</taxon>
        <taxon>Bacillati</taxon>
        <taxon>Bacillota</taxon>
        <taxon>Bacilli</taxon>
        <taxon>Bacillales</taxon>
        <taxon>Listeriaceae</taxon>
        <taxon>Listeria</taxon>
    </lineage>
</organism>
<dbReference type="EC" id="4.3.1.7" evidence="1"/>
<dbReference type="EMBL" id="FM242711">
    <property type="protein sequence ID" value="CAS04948.1"/>
    <property type="molecule type" value="Genomic_DNA"/>
</dbReference>
<dbReference type="RefSeq" id="WP_003724715.1">
    <property type="nucleotide sequence ID" value="NC_012488.1"/>
</dbReference>
<dbReference type="SMR" id="C1L282"/>
<dbReference type="KEGG" id="lmc:Lm4b_01181"/>
<dbReference type="HOGENOM" id="CLU_068224_0_0_9"/>
<dbReference type="UniPathway" id="UPA00560"/>
<dbReference type="GO" id="GO:0009350">
    <property type="term" value="C:ethanolamine ammonia-lyase complex"/>
    <property type="evidence" value="ECO:0007669"/>
    <property type="project" value="UniProtKB-UniRule"/>
</dbReference>
<dbReference type="GO" id="GO:0031471">
    <property type="term" value="C:ethanolamine degradation polyhedral organelle"/>
    <property type="evidence" value="ECO:0007669"/>
    <property type="project" value="UniProtKB-UniRule"/>
</dbReference>
<dbReference type="GO" id="GO:0031419">
    <property type="term" value="F:cobalamin binding"/>
    <property type="evidence" value="ECO:0007669"/>
    <property type="project" value="UniProtKB-UniRule"/>
</dbReference>
<dbReference type="GO" id="GO:0008851">
    <property type="term" value="F:ethanolamine ammonia-lyase activity"/>
    <property type="evidence" value="ECO:0007669"/>
    <property type="project" value="UniProtKB-UniRule"/>
</dbReference>
<dbReference type="GO" id="GO:0006520">
    <property type="term" value="P:amino acid metabolic process"/>
    <property type="evidence" value="ECO:0007669"/>
    <property type="project" value="InterPro"/>
</dbReference>
<dbReference type="GO" id="GO:0046336">
    <property type="term" value="P:ethanolamine catabolic process"/>
    <property type="evidence" value="ECO:0007669"/>
    <property type="project" value="UniProtKB-UniRule"/>
</dbReference>
<dbReference type="FunFam" id="1.10.30.40:FF:000001">
    <property type="entry name" value="Ethanolamine ammonia-lyase light chain"/>
    <property type="match status" value="1"/>
</dbReference>
<dbReference type="FunFam" id="3.40.50.11240:FF:000001">
    <property type="entry name" value="Ethanolamine ammonia-lyase light chain"/>
    <property type="match status" value="1"/>
</dbReference>
<dbReference type="Gene3D" id="3.40.50.11240">
    <property type="entry name" value="Ethanolamine ammonia-lyase light chain (EutC)"/>
    <property type="match status" value="1"/>
</dbReference>
<dbReference type="Gene3D" id="1.10.30.40">
    <property type="entry name" value="Ethanolamine ammonia-lyase light chain (EutC), N-terminal domain"/>
    <property type="match status" value="1"/>
</dbReference>
<dbReference type="HAMAP" id="MF_00601">
    <property type="entry name" value="EutC"/>
    <property type="match status" value="1"/>
</dbReference>
<dbReference type="InterPro" id="IPR009246">
    <property type="entry name" value="EutC"/>
</dbReference>
<dbReference type="InterPro" id="IPR042251">
    <property type="entry name" value="EutC_C"/>
</dbReference>
<dbReference type="InterPro" id="IPR042255">
    <property type="entry name" value="EutC_N"/>
</dbReference>
<dbReference type="NCBIfam" id="NF003971">
    <property type="entry name" value="PRK05465.1"/>
    <property type="match status" value="1"/>
</dbReference>
<dbReference type="PANTHER" id="PTHR39330">
    <property type="entry name" value="ETHANOLAMINE AMMONIA-LYASE LIGHT CHAIN"/>
    <property type="match status" value="1"/>
</dbReference>
<dbReference type="PANTHER" id="PTHR39330:SF1">
    <property type="entry name" value="ETHANOLAMINE AMMONIA-LYASE SMALL SUBUNIT"/>
    <property type="match status" value="1"/>
</dbReference>
<dbReference type="Pfam" id="PF05985">
    <property type="entry name" value="EutC"/>
    <property type="match status" value="1"/>
</dbReference>
<dbReference type="PIRSF" id="PIRSF018982">
    <property type="entry name" value="EutC"/>
    <property type="match status" value="1"/>
</dbReference>
<gene>
    <name evidence="1" type="primary">eutC</name>
    <name type="ordered locus">Lm4b_01181</name>
</gene>